<organism>
    <name type="scientific">Buchnera aphidicola subsp. Schizaphis graminum (strain Sg)</name>
    <dbReference type="NCBI Taxonomy" id="198804"/>
    <lineage>
        <taxon>Bacteria</taxon>
        <taxon>Pseudomonadati</taxon>
        <taxon>Pseudomonadota</taxon>
        <taxon>Gammaproteobacteria</taxon>
        <taxon>Enterobacterales</taxon>
        <taxon>Erwiniaceae</taxon>
        <taxon>Buchnera</taxon>
    </lineage>
</organism>
<protein>
    <recommendedName>
        <fullName>DNA polymerase III subunit epsilon</fullName>
        <ecNumber>2.7.7.7</ecNumber>
    </recommendedName>
</protein>
<proteinExistence type="inferred from homology"/>
<accession>Q08880</accession>
<dbReference type="EC" id="2.7.7.7"/>
<dbReference type="EMBL" id="U77464">
    <property type="protein sequence ID" value="AAC44791.1"/>
    <property type="molecule type" value="Genomic_DNA"/>
</dbReference>
<dbReference type="EMBL" id="AE013218">
    <property type="protein sequence ID" value="AAM67799.1"/>
    <property type="status" value="ALT_INIT"/>
    <property type="molecule type" value="Genomic_DNA"/>
</dbReference>
<dbReference type="EMBL" id="L18927">
    <property type="protein sequence ID" value="AAA17435.1"/>
    <property type="molecule type" value="Genomic_DNA"/>
</dbReference>
<dbReference type="PIR" id="I40594">
    <property type="entry name" value="I40594"/>
</dbReference>
<dbReference type="SMR" id="Q08880"/>
<dbReference type="STRING" id="198804.BUsg_240"/>
<dbReference type="KEGG" id="bas:BUsg_240"/>
<dbReference type="eggNOG" id="COG0847">
    <property type="taxonomic scope" value="Bacteria"/>
</dbReference>
<dbReference type="HOGENOM" id="CLU_047806_2_0_6"/>
<dbReference type="Proteomes" id="UP000000416">
    <property type="component" value="Chromosome"/>
</dbReference>
<dbReference type="GO" id="GO:0005829">
    <property type="term" value="C:cytosol"/>
    <property type="evidence" value="ECO:0007669"/>
    <property type="project" value="TreeGrafter"/>
</dbReference>
<dbReference type="GO" id="GO:0008408">
    <property type="term" value="F:3'-5' exonuclease activity"/>
    <property type="evidence" value="ECO:0007669"/>
    <property type="project" value="TreeGrafter"/>
</dbReference>
<dbReference type="GO" id="GO:0003677">
    <property type="term" value="F:DNA binding"/>
    <property type="evidence" value="ECO:0007669"/>
    <property type="project" value="InterPro"/>
</dbReference>
<dbReference type="GO" id="GO:0003887">
    <property type="term" value="F:DNA-directed DNA polymerase activity"/>
    <property type="evidence" value="ECO:0007669"/>
    <property type="project" value="UniProtKB-KW"/>
</dbReference>
<dbReference type="GO" id="GO:0046872">
    <property type="term" value="F:metal ion binding"/>
    <property type="evidence" value="ECO:0007669"/>
    <property type="project" value="UniProtKB-KW"/>
</dbReference>
<dbReference type="GO" id="GO:0045004">
    <property type="term" value="P:DNA replication proofreading"/>
    <property type="evidence" value="ECO:0007669"/>
    <property type="project" value="TreeGrafter"/>
</dbReference>
<dbReference type="CDD" id="cd06131">
    <property type="entry name" value="DNA_pol_III_epsilon_Ecoli_like"/>
    <property type="match status" value="1"/>
</dbReference>
<dbReference type="FunFam" id="3.30.420.10:FF:000012">
    <property type="entry name" value="DNA polymerase III subunit epsilon"/>
    <property type="match status" value="1"/>
</dbReference>
<dbReference type="Gene3D" id="3.30.420.10">
    <property type="entry name" value="Ribonuclease H-like superfamily/Ribonuclease H"/>
    <property type="match status" value="1"/>
</dbReference>
<dbReference type="InterPro" id="IPR006054">
    <property type="entry name" value="DnaQ"/>
</dbReference>
<dbReference type="InterPro" id="IPR006309">
    <property type="entry name" value="DnaQ_proteo"/>
</dbReference>
<dbReference type="InterPro" id="IPR013520">
    <property type="entry name" value="Exonuclease_RNaseT/DNA_pol3"/>
</dbReference>
<dbReference type="InterPro" id="IPR012337">
    <property type="entry name" value="RNaseH-like_sf"/>
</dbReference>
<dbReference type="InterPro" id="IPR036397">
    <property type="entry name" value="RNaseH_sf"/>
</dbReference>
<dbReference type="NCBIfam" id="TIGR00573">
    <property type="entry name" value="dnaq"/>
    <property type="match status" value="1"/>
</dbReference>
<dbReference type="NCBIfam" id="TIGR01406">
    <property type="entry name" value="dnaQ_proteo"/>
    <property type="match status" value="1"/>
</dbReference>
<dbReference type="NCBIfam" id="NF004316">
    <property type="entry name" value="PRK05711.1"/>
    <property type="match status" value="1"/>
</dbReference>
<dbReference type="PANTHER" id="PTHR30231">
    <property type="entry name" value="DNA POLYMERASE III SUBUNIT EPSILON"/>
    <property type="match status" value="1"/>
</dbReference>
<dbReference type="PANTHER" id="PTHR30231:SF41">
    <property type="entry name" value="DNA POLYMERASE III SUBUNIT EPSILON"/>
    <property type="match status" value="1"/>
</dbReference>
<dbReference type="Pfam" id="PF00929">
    <property type="entry name" value="RNase_T"/>
    <property type="match status" value="1"/>
</dbReference>
<dbReference type="SMART" id="SM00479">
    <property type="entry name" value="EXOIII"/>
    <property type="match status" value="1"/>
</dbReference>
<dbReference type="SUPFAM" id="SSF53098">
    <property type="entry name" value="Ribonuclease H-like"/>
    <property type="match status" value="1"/>
</dbReference>
<reference key="1">
    <citation type="journal article" date="1997" name="FEBS Lett.">
        <title>Evolution of dnaQ, the gene encoding the editing 3' to 5' exonuclease subunit of DNA polymerase III holoenzyme in Gram-negative bacteria.</title>
        <authorList>
            <person name="Huang Y."/>
            <person name="Braithwaite D.K."/>
            <person name="Ito J."/>
        </authorList>
    </citation>
    <scope>NUCLEOTIDE SEQUENCE [GENOMIC DNA]</scope>
</reference>
<reference key="2">
    <citation type="journal article" date="2002" name="Science">
        <title>50 million years of genomic stasis in endosymbiotic bacteria.</title>
        <authorList>
            <person name="Tamas I."/>
            <person name="Klasson L."/>
            <person name="Canbaeck B."/>
            <person name="Naeslund A.K."/>
            <person name="Eriksson A.-S."/>
            <person name="Wernegreen J.J."/>
            <person name="Sandstroem J.P."/>
            <person name="Moran N.A."/>
            <person name="Andersson S.G.E."/>
        </authorList>
    </citation>
    <scope>NUCLEOTIDE SEQUENCE [LARGE SCALE GENOMIC DNA]</scope>
    <source>
        <strain>Sg</strain>
    </source>
</reference>
<reference key="3">
    <citation type="journal article" date="1993" name="Gene">
        <title>Buchnera aphidicola (a prokaryotic endosymbiont of aphids) contains a putative 16S rRNA operon unlinked to the 23S rRNA-encoding gene: sequence determination, and promoter and terminator analysis.</title>
        <authorList>
            <person name="Munson M.A."/>
            <person name="Baumann L."/>
            <person name="Baumann P."/>
        </authorList>
    </citation>
    <scope>NUCLEOTIDE SEQUENCE [GENOMIC DNA] OF 1-179</scope>
</reference>
<name>DPO3E_BUCAP</name>
<comment type="function">
    <text evidence="1">DNA polymerase III is a complex, multichain enzyme responsible for most of the replicative synthesis in bacteria. The epsilon subunit contain the editing function and is a proofreading 3'-5' exonuclease (By similarity).</text>
</comment>
<comment type="catalytic activity">
    <reaction>
        <text>DNA(n) + a 2'-deoxyribonucleoside 5'-triphosphate = DNA(n+1) + diphosphate</text>
        <dbReference type="Rhea" id="RHEA:22508"/>
        <dbReference type="Rhea" id="RHEA-COMP:17339"/>
        <dbReference type="Rhea" id="RHEA-COMP:17340"/>
        <dbReference type="ChEBI" id="CHEBI:33019"/>
        <dbReference type="ChEBI" id="CHEBI:61560"/>
        <dbReference type="ChEBI" id="CHEBI:173112"/>
        <dbReference type="EC" id="2.7.7.7"/>
    </reaction>
</comment>
<comment type="cofactor">
    <cofactor evidence="1">
        <name>Mg(2+)</name>
        <dbReference type="ChEBI" id="CHEBI:18420"/>
    </cofactor>
    <cofactor evidence="1">
        <name>Mn(2+)</name>
        <dbReference type="ChEBI" id="CHEBI:29035"/>
    </cofactor>
    <text evidence="1">Binds 2 divalent metal cations. Magnesium or manganese.</text>
</comment>
<comment type="subunit">
    <text evidence="1">The DNA polymerase holoenzyme is a complex that contains 10 different types of subunits. These subunits are organized into 3 functionally essential subassemblies: the pol III core, the beta sliding clamp processivity factor and the clamp-loading complex. The pol III core (subunits alpha,epsilon and theta) contains the polymerase and the 3'-5' exonuclease proofreading activities. The polymerase is tethered to the template via the sliding clamp processivity factor. The clamp-loading complex assembles the beta processivity factor onto the primer template and plays a central role in the organization and communication at the replication fork. This complex contains delta, delta', psi and chi, and copies of either or both of two different DnaX proteins, gamma and tau. The composition of the holoenzyme is, therefore: (alpha,epsilon,theta)[2]-(gamma/tau)[3]-delta,delta', psi,chi-beta[4] (By similarity).</text>
</comment>
<comment type="sequence caution" evidence="2">
    <conflict type="erroneous initiation">
        <sequence resource="EMBL-CDS" id="AAM67799"/>
    </conflict>
</comment>
<sequence>MNNTQRIIVLDTETTGMNSVGPPYLNHRIIEIGAIEIINRRFTGKKFHTYIKPNRLIESDASKIHGITDDFLSDKPSFKDIAKDFFNYIKNSELIIHNASFDVGFINQEFSMLTKKIQDISNFCNIIDTLKIARKLFPGKKNTLDALCMRYKIKNSHRVLHGAILDAFLLGKLYLLMTSGQESIIFNKNIQNERNFRYIKKSITKKHRFLKIIKANKTELKLHNEYLKFLKEK</sequence>
<gene>
    <name type="primary">dnaQ</name>
    <name type="synonym">mutD</name>
    <name type="ordered locus">BUsg_240</name>
</gene>
<keyword id="KW-0235">DNA replication</keyword>
<keyword id="KW-0239">DNA-directed DNA polymerase</keyword>
<keyword id="KW-0269">Exonuclease</keyword>
<keyword id="KW-0378">Hydrolase</keyword>
<keyword id="KW-0460">Magnesium</keyword>
<keyword id="KW-0464">Manganese</keyword>
<keyword id="KW-0479">Metal-binding</keyword>
<keyword id="KW-0540">Nuclease</keyword>
<keyword id="KW-0548">Nucleotidyltransferase</keyword>
<keyword id="KW-0808">Transferase</keyword>
<feature type="chain" id="PRO_0000105481" description="DNA polymerase III subunit epsilon">
    <location>
        <begin position="1"/>
        <end position="233"/>
    </location>
</feature>
<feature type="active site" description="Proton acceptor" evidence="1">
    <location>
        <position position="161"/>
    </location>
</feature>
<feature type="binding site" evidence="1">
    <location>
        <position position="11"/>
    </location>
    <ligand>
        <name>a divalent metal cation</name>
        <dbReference type="ChEBI" id="CHEBI:60240"/>
        <label>1</label>
        <note>catalytic</note>
    </ligand>
</feature>
<feature type="binding site" evidence="1">
    <location>
        <position position="11"/>
    </location>
    <ligand>
        <name>a divalent metal cation</name>
        <dbReference type="ChEBI" id="CHEBI:60240"/>
        <label>2</label>
        <note>catalytic</note>
    </ligand>
</feature>
<feature type="binding site" evidence="1">
    <location>
        <position position="11"/>
    </location>
    <ligand>
        <name>substrate</name>
    </ligand>
</feature>
<feature type="binding site" evidence="1">
    <location>
        <position position="13"/>
    </location>
    <ligand>
        <name>a divalent metal cation</name>
        <dbReference type="ChEBI" id="CHEBI:60240"/>
        <label>1</label>
        <note>catalytic</note>
    </ligand>
</feature>
<feature type="binding site" evidence="1">
    <location>
        <position position="13"/>
    </location>
    <ligand>
        <name>substrate</name>
    </ligand>
</feature>
<feature type="binding site" evidence="1">
    <location>
        <position position="60"/>
    </location>
    <ligand>
        <name>substrate</name>
    </ligand>
</feature>
<feature type="binding site" evidence="1">
    <location>
        <position position="65"/>
    </location>
    <ligand>
        <name>substrate</name>
    </ligand>
</feature>
<feature type="binding site" evidence="1">
    <location>
        <position position="166"/>
    </location>
    <ligand>
        <name>a divalent metal cation</name>
        <dbReference type="ChEBI" id="CHEBI:60240"/>
        <label>1</label>
        <note>catalytic</note>
    </ligand>
</feature>
<feature type="binding site" evidence="1">
    <location>
        <position position="166"/>
    </location>
    <ligand>
        <name>substrate</name>
    </ligand>
</feature>
<evidence type="ECO:0000250" key="1"/>
<evidence type="ECO:0000305" key="2"/>